<protein>
    <recommendedName>
        <fullName evidence="1">Large ribosomal subunit protein uL23</fullName>
    </recommendedName>
    <alternativeName>
        <fullName evidence="2">50S ribosomal protein L23</fullName>
    </alternativeName>
</protein>
<name>RL23_MYCMM</name>
<dbReference type="EMBL" id="CP000854">
    <property type="protein sequence ID" value="ACC39491.1"/>
    <property type="molecule type" value="Genomic_DNA"/>
</dbReference>
<dbReference type="RefSeq" id="WP_012392940.1">
    <property type="nucleotide sequence ID" value="NC_010612.1"/>
</dbReference>
<dbReference type="SMR" id="B2HSN3"/>
<dbReference type="STRING" id="216594.MMAR_1033"/>
<dbReference type="GeneID" id="34340759"/>
<dbReference type="GeneID" id="93438598"/>
<dbReference type="KEGG" id="mmi:MMAR_1033"/>
<dbReference type="eggNOG" id="COG0089">
    <property type="taxonomic scope" value="Bacteria"/>
</dbReference>
<dbReference type="HOGENOM" id="CLU_037562_3_2_11"/>
<dbReference type="OrthoDB" id="9793353at2"/>
<dbReference type="Proteomes" id="UP000001190">
    <property type="component" value="Chromosome"/>
</dbReference>
<dbReference type="GO" id="GO:1990904">
    <property type="term" value="C:ribonucleoprotein complex"/>
    <property type="evidence" value="ECO:0007669"/>
    <property type="project" value="UniProtKB-KW"/>
</dbReference>
<dbReference type="GO" id="GO:0005840">
    <property type="term" value="C:ribosome"/>
    <property type="evidence" value="ECO:0007669"/>
    <property type="project" value="UniProtKB-KW"/>
</dbReference>
<dbReference type="GO" id="GO:0019843">
    <property type="term" value="F:rRNA binding"/>
    <property type="evidence" value="ECO:0007669"/>
    <property type="project" value="UniProtKB-UniRule"/>
</dbReference>
<dbReference type="GO" id="GO:0003735">
    <property type="term" value="F:structural constituent of ribosome"/>
    <property type="evidence" value="ECO:0007669"/>
    <property type="project" value="InterPro"/>
</dbReference>
<dbReference type="GO" id="GO:0006412">
    <property type="term" value="P:translation"/>
    <property type="evidence" value="ECO:0007669"/>
    <property type="project" value="UniProtKB-UniRule"/>
</dbReference>
<dbReference type="FunFam" id="3.30.70.330:FF:000001">
    <property type="entry name" value="50S ribosomal protein L23"/>
    <property type="match status" value="1"/>
</dbReference>
<dbReference type="Gene3D" id="3.30.70.330">
    <property type="match status" value="1"/>
</dbReference>
<dbReference type="HAMAP" id="MF_01369_B">
    <property type="entry name" value="Ribosomal_uL23_B"/>
    <property type="match status" value="1"/>
</dbReference>
<dbReference type="InterPro" id="IPR012677">
    <property type="entry name" value="Nucleotide-bd_a/b_plait_sf"/>
</dbReference>
<dbReference type="InterPro" id="IPR013025">
    <property type="entry name" value="Ribosomal_uL23-like"/>
</dbReference>
<dbReference type="InterPro" id="IPR012678">
    <property type="entry name" value="Ribosomal_uL23/eL15/eS24_sf"/>
</dbReference>
<dbReference type="InterPro" id="IPR001014">
    <property type="entry name" value="Ribosomal_uL23_CS"/>
</dbReference>
<dbReference type="NCBIfam" id="NF004363">
    <property type="entry name" value="PRK05738.2-4"/>
    <property type="match status" value="1"/>
</dbReference>
<dbReference type="NCBIfam" id="NF004364">
    <property type="entry name" value="PRK05738.2-5"/>
    <property type="match status" value="1"/>
</dbReference>
<dbReference type="PANTHER" id="PTHR11620">
    <property type="entry name" value="60S RIBOSOMAL PROTEIN L23A"/>
    <property type="match status" value="1"/>
</dbReference>
<dbReference type="Pfam" id="PF00276">
    <property type="entry name" value="Ribosomal_L23"/>
    <property type="match status" value="1"/>
</dbReference>
<dbReference type="SUPFAM" id="SSF54189">
    <property type="entry name" value="Ribosomal proteins S24e, L23 and L15e"/>
    <property type="match status" value="1"/>
</dbReference>
<dbReference type="PROSITE" id="PS00050">
    <property type="entry name" value="RIBOSOMAL_L23"/>
    <property type="match status" value="1"/>
</dbReference>
<comment type="function">
    <text evidence="1">One of the early assembly proteins it binds 23S rRNA. One of the proteins that surrounds the polypeptide exit tunnel on the outside of the ribosome. Forms the main docking site for trigger factor binding to the ribosome.</text>
</comment>
<comment type="subunit">
    <text evidence="1">Part of the 50S ribosomal subunit. Contacts protein L29, and trigger factor when it is bound to the ribosome.</text>
</comment>
<comment type="similarity">
    <text evidence="1">Belongs to the universal ribosomal protein uL23 family.</text>
</comment>
<gene>
    <name evidence="1" type="primary">rplW</name>
    <name type="ordered locus">MMAR_1033</name>
</gene>
<keyword id="KW-1185">Reference proteome</keyword>
<keyword id="KW-0687">Ribonucleoprotein</keyword>
<keyword id="KW-0689">Ribosomal protein</keyword>
<keyword id="KW-0694">RNA-binding</keyword>
<keyword id="KW-0699">rRNA-binding</keyword>
<organism>
    <name type="scientific">Mycobacterium marinum (strain ATCC BAA-535 / M)</name>
    <dbReference type="NCBI Taxonomy" id="216594"/>
    <lineage>
        <taxon>Bacteria</taxon>
        <taxon>Bacillati</taxon>
        <taxon>Actinomycetota</taxon>
        <taxon>Actinomycetes</taxon>
        <taxon>Mycobacteriales</taxon>
        <taxon>Mycobacteriaceae</taxon>
        <taxon>Mycobacterium</taxon>
        <taxon>Mycobacterium ulcerans group</taxon>
    </lineage>
</organism>
<accession>B2HSN3</accession>
<sequence length="100" mass="10953">MATIVDPRDIILAPVISEKSYALLDDNVYTFVVHPDSNKTQIKIAIEKIFAVKVASVNTANRQGKRKRTRTGYGKRKSTKRAIVTLAPGSKPIDLFGAPA</sequence>
<feature type="chain" id="PRO_1000144593" description="Large ribosomal subunit protein uL23">
    <location>
        <begin position="1"/>
        <end position="100"/>
    </location>
</feature>
<proteinExistence type="inferred from homology"/>
<evidence type="ECO:0000255" key="1">
    <source>
        <dbReference type="HAMAP-Rule" id="MF_01369"/>
    </source>
</evidence>
<evidence type="ECO:0000305" key="2"/>
<reference key="1">
    <citation type="journal article" date="2008" name="Genome Res.">
        <title>Insights from the complete genome sequence of Mycobacterium marinum on the evolution of Mycobacterium tuberculosis.</title>
        <authorList>
            <person name="Stinear T.P."/>
            <person name="Seemann T."/>
            <person name="Harrison P.F."/>
            <person name="Jenkin G.A."/>
            <person name="Davies J.K."/>
            <person name="Johnson P.D."/>
            <person name="Abdellah Z."/>
            <person name="Arrowsmith C."/>
            <person name="Chillingworth T."/>
            <person name="Churcher C."/>
            <person name="Clarke K."/>
            <person name="Cronin A."/>
            <person name="Davis P."/>
            <person name="Goodhead I."/>
            <person name="Holroyd N."/>
            <person name="Jagels K."/>
            <person name="Lord A."/>
            <person name="Moule S."/>
            <person name="Mungall K."/>
            <person name="Norbertczak H."/>
            <person name="Quail M.A."/>
            <person name="Rabbinowitsch E."/>
            <person name="Walker D."/>
            <person name="White B."/>
            <person name="Whitehead S."/>
            <person name="Small P.L."/>
            <person name="Brosch R."/>
            <person name="Ramakrishnan L."/>
            <person name="Fischbach M.A."/>
            <person name="Parkhill J."/>
            <person name="Cole S.T."/>
        </authorList>
    </citation>
    <scope>NUCLEOTIDE SEQUENCE [LARGE SCALE GENOMIC DNA]</scope>
    <source>
        <strain>ATCC BAA-535 / M</strain>
    </source>
</reference>